<feature type="chain" id="PRO_0000123657" description="Isoprenyl transferase">
    <location>
        <begin position="1"/>
        <end position="258"/>
    </location>
</feature>
<feature type="active site" evidence="1">
    <location>
        <position position="24"/>
    </location>
</feature>
<feature type="active site" description="Proton acceptor" evidence="1">
    <location>
        <position position="72"/>
    </location>
</feature>
<feature type="binding site" evidence="1">
    <location>
        <position position="24"/>
    </location>
    <ligand>
        <name>Mg(2+)</name>
        <dbReference type="ChEBI" id="CHEBI:18420"/>
    </ligand>
</feature>
<feature type="binding site" evidence="1">
    <location>
        <begin position="25"/>
        <end position="28"/>
    </location>
    <ligand>
        <name>substrate</name>
    </ligand>
</feature>
<feature type="binding site" evidence="1">
    <location>
        <position position="29"/>
    </location>
    <ligand>
        <name>substrate</name>
    </ligand>
</feature>
<feature type="binding site" evidence="1">
    <location>
        <position position="37"/>
    </location>
    <ligand>
        <name>substrate</name>
    </ligand>
</feature>
<feature type="binding site" evidence="1">
    <location>
        <position position="41"/>
    </location>
    <ligand>
        <name>substrate</name>
    </ligand>
</feature>
<feature type="binding site" evidence="1">
    <location>
        <begin position="69"/>
        <end position="71"/>
    </location>
    <ligand>
        <name>substrate</name>
    </ligand>
</feature>
<feature type="binding site" evidence="1">
    <location>
        <position position="73"/>
    </location>
    <ligand>
        <name>substrate</name>
    </ligand>
</feature>
<feature type="binding site" evidence="1">
    <location>
        <position position="75"/>
    </location>
    <ligand>
        <name>substrate</name>
    </ligand>
</feature>
<feature type="binding site" evidence="1">
    <location>
        <position position="190"/>
    </location>
    <ligand>
        <name>substrate</name>
    </ligand>
</feature>
<feature type="binding site" evidence="1">
    <location>
        <begin position="196"/>
        <end position="198"/>
    </location>
    <ligand>
        <name>substrate</name>
    </ligand>
</feature>
<feature type="binding site" evidence="1">
    <location>
        <position position="209"/>
    </location>
    <ligand>
        <name>Mg(2+)</name>
        <dbReference type="ChEBI" id="CHEBI:18420"/>
    </ligand>
</feature>
<gene>
    <name evidence="1" type="primary">uppS</name>
    <name type="ordered locus">RSc1408</name>
    <name type="ORF">RS05284</name>
</gene>
<proteinExistence type="inferred from homology"/>
<organism>
    <name type="scientific">Ralstonia nicotianae (strain ATCC BAA-1114 / GMI1000)</name>
    <name type="common">Ralstonia solanacearum</name>
    <dbReference type="NCBI Taxonomy" id="267608"/>
    <lineage>
        <taxon>Bacteria</taxon>
        <taxon>Pseudomonadati</taxon>
        <taxon>Pseudomonadota</taxon>
        <taxon>Betaproteobacteria</taxon>
        <taxon>Burkholderiales</taxon>
        <taxon>Burkholderiaceae</taxon>
        <taxon>Ralstonia</taxon>
        <taxon>Ralstonia solanacearum species complex</taxon>
    </lineage>
</organism>
<accession>Q8XZI7</accession>
<dbReference type="EC" id="2.5.1.-" evidence="1"/>
<dbReference type="EMBL" id="AL646052">
    <property type="protein sequence ID" value="CAD15110.1"/>
    <property type="molecule type" value="Genomic_DNA"/>
</dbReference>
<dbReference type="RefSeq" id="WP_011001357.1">
    <property type="nucleotide sequence ID" value="NC_003295.1"/>
</dbReference>
<dbReference type="SMR" id="Q8XZI7"/>
<dbReference type="STRING" id="267608.RSc1408"/>
<dbReference type="EnsemblBacteria" id="CAD15110">
    <property type="protein sequence ID" value="CAD15110"/>
    <property type="gene ID" value="RSc1408"/>
</dbReference>
<dbReference type="KEGG" id="rso:RSc1408"/>
<dbReference type="PATRIC" id="fig|267608.8.peg.1439"/>
<dbReference type="eggNOG" id="COG0020">
    <property type="taxonomic scope" value="Bacteria"/>
</dbReference>
<dbReference type="HOGENOM" id="CLU_038505_1_1_4"/>
<dbReference type="Proteomes" id="UP000001436">
    <property type="component" value="Chromosome"/>
</dbReference>
<dbReference type="GO" id="GO:0005829">
    <property type="term" value="C:cytosol"/>
    <property type="evidence" value="ECO:0007669"/>
    <property type="project" value="TreeGrafter"/>
</dbReference>
<dbReference type="GO" id="GO:0008834">
    <property type="term" value="F:ditrans,polycis-undecaprenyl-diphosphate synthase [(2E,6E)-farnesyl-diphosphate specific] activity"/>
    <property type="evidence" value="ECO:0007669"/>
    <property type="project" value="TreeGrafter"/>
</dbReference>
<dbReference type="GO" id="GO:0000287">
    <property type="term" value="F:magnesium ion binding"/>
    <property type="evidence" value="ECO:0007669"/>
    <property type="project" value="UniProtKB-UniRule"/>
</dbReference>
<dbReference type="GO" id="GO:0016094">
    <property type="term" value="P:polyprenol biosynthetic process"/>
    <property type="evidence" value="ECO:0007669"/>
    <property type="project" value="TreeGrafter"/>
</dbReference>
<dbReference type="CDD" id="cd00475">
    <property type="entry name" value="Cis_IPPS"/>
    <property type="match status" value="1"/>
</dbReference>
<dbReference type="FunFam" id="3.40.1180.10:FF:000001">
    <property type="entry name" value="(2E,6E)-farnesyl-diphosphate-specific ditrans,polycis-undecaprenyl-diphosphate synthase"/>
    <property type="match status" value="1"/>
</dbReference>
<dbReference type="Gene3D" id="3.40.1180.10">
    <property type="entry name" value="Decaprenyl diphosphate synthase-like"/>
    <property type="match status" value="1"/>
</dbReference>
<dbReference type="HAMAP" id="MF_01139">
    <property type="entry name" value="ISPT"/>
    <property type="match status" value="1"/>
</dbReference>
<dbReference type="InterPro" id="IPR001441">
    <property type="entry name" value="UPP_synth-like"/>
</dbReference>
<dbReference type="InterPro" id="IPR018520">
    <property type="entry name" value="UPP_synth-like_CS"/>
</dbReference>
<dbReference type="InterPro" id="IPR036424">
    <property type="entry name" value="UPP_synth-like_sf"/>
</dbReference>
<dbReference type="NCBIfam" id="TIGR00055">
    <property type="entry name" value="uppS"/>
    <property type="match status" value="1"/>
</dbReference>
<dbReference type="PANTHER" id="PTHR10291:SF0">
    <property type="entry name" value="DEHYDRODOLICHYL DIPHOSPHATE SYNTHASE 2"/>
    <property type="match status" value="1"/>
</dbReference>
<dbReference type="PANTHER" id="PTHR10291">
    <property type="entry name" value="DEHYDRODOLICHYL DIPHOSPHATE SYNTHASE FAMILY MEMBER"/>
    <property type="match status" value="1"/>
</dbReference>
<dbReference type="Pfam" id="PF01255">
    <property type="entry name" value="Prenyltransf"/>
    <property type="match status" value="1"/>
</dbReference>
<dbReference type="SUPFAM" id="SSF64005">
    <property type="entry name" value="Undecaprenyl diphosphate synthase"/>
    <property type="match status" value="1"/>
</dbReference>
<dbReference type="PROSITE" id="PS01066">
    <property type="entry name" value="UPP_SYNTHASE"/>
    <property type="match status" value="1"/>
</dbReference>
<comment type="function">
    <text evidence="1">Catalyzes the condensation of isopentenyl diphosphate (IPP) with allylic pyrophosphates generating different type of terpenoids.</text>
</comment>
<comment type="cofactor">
    <cofactor evidence="1">
        <name>Mg(2+)</name>
        <dbReference type="ChEBI" id="CHEBI:18420"/>
    </cofactor>
    <text evidence="1">Binds 2 magnesium ions per subunit.</text>
</comment>
<comment type="subunit">
    <text evidence="1">Homodimer.</text>
</comment>
<comment type="similarity">
    <text evidence="1">Belongs to the UPP synthase family.</text>
</comment>
<protein>
    <recommendedName>
        <fullName evidence="1">Isoprenyl transferase</fullName>
        <ecNumber evidence="1">2.5.1.-</ecNumber>
    </recommendedName>
</protein>
<name>ISPT_RALN1</name>
<evidence type="ECO:0000255" key="1">
    <source>
        <dbReference type="HAMAP-Rule" id="MF_01139"/>
    </source>
</evidence>
<keyword id="KW-0460">Magnesium</keyword>
<keyword id="KW-0479">Metal-binding</keyword>
<keyword id="KW-1185">Reference proteome</keyword>
<keyword id="KW-0808">Transferase</keyword>
<reference key="1">
    <citation type="journal article" date="2002" name="Nature">
        <title>Genome sequence of the plant pathogen Ralstonia solanacearum.</title>
        <authorList>
            <person name="Salanoubat M."/>
            <person name="Genin S."/>
            <person name="Artiguenave F."/>
            <person name="Gouzy J."/>
            <person name="Mangenot S."/>
            <person name="Arlat M."/>
            <person name="Billault A."/>
            <person name="Brottier P."/>
            <person name="Camus J.-C."/>
            <person name="Cattolico L."/>
            <person name="Chandler M."/>
            <person name="Choisne N."/>
            <person name="Claudel-Renard C."/>
            <person name="Cunnac S."/>
            <person name="Demange N."/>
            <person name="Gaspin C."/>
            <person name="Lavie M."/>
            <person name="Moisan A."/>
            <person name="Robert C."/>
            <person name="Saurin W."/>
            <person name="Schiex T."/>
            <person name="Siguier P."/>
            <person name="Thebault P."/>
            <person name="Whalen M."/>
            <person name="Wincker P."/>
            <person name="Levy M."/>
            <person name="Weissenbach J."/>
            <person name="Boucher C.A."/>
        </authorList>
    </citation>
    <scope>NUCLEOTIDE SEQUENCE [LARGE SCALE GENOMIC DNA]</scope>
    <source>
        <strain>ATCC BAA-1114 / GMI1000</strain>
    </source>
</reference>
<sequence>MHISSTLAVPDTADTPHHVAIIMDGNGRWATERHLPRMAGHSRGLDAVRAAVQAADHRGVRYLTLFAFSSENWRRPAEEISFLMKLFMTALRREVSKLNDSGIRLRVVGDLSAFSPRIQLMIREAEAKTATNPGLTVTIAANYGGRWDILQAMRALVADQPDIAPEAITEEALSPYMALAYASEPDLFIRTGGEQRISNFMLWQLAYSELYFTERYWPDFDAAEMDRAFAWYRNRERRFGRTSAQLEPGTAPALSAGA</sequence>